<comment type="function">
    <text evidence="1">Subunit of the peripheral V1 complex of vacuolar ATPase. Vacuolar ATPase is responsible for acidifying a variety of intracellular compartments in eukaryotic cells, thus providing most of the energy required for transport processes in the vacuolar system (By similarity).</text>
</comment>
<comment type="subunit">
    <text evidence="1">V-ATPase is a heteromultimeric enzyme composed of a peripheral catalytic V1 complex (components A to H) attached to an integral membrane V0 proton pore complex (components: a, c, c', c'' and d).</text>
</comment>
<comment type="similarity">
    <text evidence="3">Belongs to the V-ATPase D subunit family.</text>
</comment>
<accession>Q86A77</accession>
<accession>Q555Z1</accession>
<reference key="1">
    <citation type="journal article" date="2002" name="Nature">
        <title>Sequence and analysis of chromosome 2 of Dictyostelium discoideum.</title>
        <authorList>
            <person name="Gloeckner G."/>
            <person name="Eichinger L."/>
            <person name="Szafranski K."/>
            <person name="Pachebat J.A."/>
            <person name="Bankier A.T."/>
            <person name="Dear P.H."/>
            <person name="Lehmann R."/>
            <person name="Baumgart C."/>
            <person name="Parra G."/>
            <person name="Abril J.F."/>
            <person name="Guigo R."/>
            <person name="Kumpf K."/>
            <person name="Tunggal B."/>
            <person name="Cox E.C."/>
            <person name="Quail M.A."/>
            <person name="Platzer M."/>
            <person name="Rosenthal A."/>
            <person name="Noegel A.A."/>
        </authorList>
    </citation>
    <scope>NUCLEOTIDE SEQUENCE [LARGE SCALE GENOMIC DNA]</scope>
    <source>
        <strain>AX4</strain>
    </source>
</reference>
<reference key="2">
    <citation type="journal article" date="2005" name="Nature">
        <title>The genome of the social amoeba Dictyostelium discoideum.</title>
        <authorList>
            <person name="Eichinger L."/>
            <person name="Pachebat J.A."/>
            <person name="Gloeckner G."/>
            <person name="Rajandream M.A."/>
            <person name="Sucgang R."/>
            <person name="Berriman M."/>
            <person name="Song J."/>
            <person name="Olsen R."/>
            <person name="Szafranski K."/>
            <person name="Xu Q."/>
            <person name="Tunggal B."/>
            <person name="Kummerfeld S."/>
            <person name="Madera M."/>
            <person name="Konfortov B.A."/>
            <person name="Rivero F."/>
            <person name="Bankier A.T."/>
            <person name="Lehmann R."/>
            <person name="Hamlin N."/>
            <person name="Davies R."/>
            <person name="Gaudet P."/>
            <person name="Fey P."/>
            <person name="Pilcher K."/>
            <person name="Chen G."/>
            <person name="Saunders D."/>
            <person name="Sodergren E.J."/>
            <person name="Davis P."/>
            <person name="Kerhornou A."/>
            <person name="Nie X."/>
            <person name="Hall N."/>
            <person name="Anjard C."/>
            <person name="Hemphill L."/>
            <person name="Bason N."/>
            <person name="Farbrother P."/>
            <person name="Desany B."/>
            <person name="Just E."/>
            <person name="Morio T."/>
            <person name="Rost R."/>
            <person name="Churcher C.M."/>
            <person name="Cooper J."/>
            <person name="Haydock S."/>
            <person name="van Driessche N."/>
            <person name="Cronin A."/>
            <person name="Goodhead I."/>
            <person name="Muzny D.M."/>
            <person name="Mourier T."/>
            <person name="Pain A."/>
            <person name="Lu M."/>
            <person name="Harper D."/>
            <person name="Lindsay R."/>
            <person name="Hauser H."/>
            <person name="James K.D."/>
            <person name="Quiles M."/>
            <person name="Madan Babu M."/>
            <person name="Saito T."/>
            <person name="Buchrieser C."/>
            <person name="Wardroper A."/>
            <person name="Felder M."/>
            <person name="Thangavelu M."/>
            <person name="Johnson D."/>
            <person name="Knights A."/>
            <person name="Loulseged H."/>
            <person name="Mungall K.L."/>
            <person name="Oliver K."/>
            <person name="Price C."/>
            <person name="Quail M.A."/>
            <person name="Urushihara H."/>
            <person name="Hernandez J."/>
            <person name="Rabbinowitsch E."/>
            <person name="Steffen D."/>
            <person name="Sanders M."/>
            <person name="Ma J."/>
            <person name="Kohara Y."/>
            <person name="Sharp S."/>
            <person name="Simmonds M.N."/>
            <person name="Spiegler S."/>
            <person name="Tivey A."/>
            <person name="Sugano S."/>
            <person name="White B."/>
            <person name="Walker D."/>
            <person name="Woodward J.R."/>
            <person name="Winckler T."/>
            <person name="Tanaka Y."/>
            <person name="Shaulsky G."/>
            <person name="Schleicher M."/>
            <person name="Weinstock G.M."/>
            <person name="Rosenthal A."/>
            <person name="Cox E.C."/>
            <person name="Chisholm R.L."/>
            <person name="Gibbs R.A."/>
            <person name="Loomis W.F."/>
            <person name="Platzer M."/>
            <person name="Kay R.R."/>
            <person name="Williams J.G."/>
            <person name="Dear P.H."/>
            <person name="Noegel A.A."/>
            <person name="Barrell B.G."/>
            <person name="Kuspa A."/>
        </authorList>
    </citation>
    <scope>NUCLEOTIDE SEQUENCE [LARGE SCALE GENOMIC DNA]</scope>
    <source>
        <strain>AX4</strain>
    </source>
</reference>
<reference key="3">
    <citation type="journal article" date="2006" name="Mol. Cell. Proteomics">
        <title>Proteomics fingerprinting of phagosome maturation and evidence for the role of a Galpha during uptake.</title>
        <authorList>
            <person name="Gotthardt D."/>
            <person name="Blancheteau V."/>
            <person name="Bosserhoff A."/>
            <person name="Ruppert T."/>
            <person name="Delorenzi M."/>
            <person name="Soldati T."/>
        </authorList>
    </citation>
    <scope>IDENTIFICATION BY MASS SPECTROMETRY [LARGE SCALE ANALYSIS]</scope>
    <source>
        <strain>AX2</strain>
    </source>
</reference>
<protein>
    <recommendedName>
        <fullName>V-type proton ATPase subunit D</fullName>
        <shortName>V-ATPase subunit D</shortName>
    </recommendedName>
    <alternativeName>
        <fullName>Vacuolar proton pump subunit D</fullName>
    </alternativeName>
</protein>
<proteinExistence type="evidence at protein level"/>
<sequence>MSGKNRLNIFPTRMALTVMKTKLKGAVTGHSLLKKKSDALTIRFRRILANIVENKQLMGTTMRDASFSLAAAKYAAGEFSNSVIENVSNPTIAVKMTTENVAGVHLPTFEKISEGVVSNSQELTGLSKGGQQINKSRESHIKAVEALIALASLQTAFITLDEVIKITNRRVNAIEYVVKPKLENTISYIITELDESEREEFYRLKKVQGKKKKDLKAKEAQKEENSANKTIMEPASVHKVRSLIDDEPEDAELLYED</sequence>
<organism>
    <name type="scientific">Dictyostelium discoideum</name>
    <name type="common">Social amoeba</name>
    <dbReference type="NCBI Taxonomy" id="44689"/>
    <lineage>
        <taxon>Eukaryota</taxon>
        <taxon>Amoebozoa</taxon>
        <taxon>Evosea</taxon>
        <taxon>Eumycetozoa</taxon>
        <taxon>Dictyostelia</taxon>
        <taxon>Dictyosteliales</taxon>
        <taxon>Dictyosteliaceae</taxon>
        <taxon>Dictyostelium</taxon>
    </lineage>
</organism>
<feature type="chain" id="PRO_0000327814" description="V-type proton ATPase subunit D">
    <location>
        <begin position="1"/>
        <end position="257"/>
    </location>
</feature>
<feature type="region of interest" description="Disordered" evidence="2">
    <location>
        <begin position="211"/>
        <end position="233"/>
    </location>
</feature>
<feature type="compositionally biased region" description="Basic and acidic residues" evidence="2">
    <location>
        <begin position="216"/>
        <end position="226"/>
    </location>
</feature>
<gene>
    <name type="primary">atp6v1d</name>
    <name type="ORF">DDB_G0274331</name>
</gene>
<keyword id="KW-0375">Hydrogen ion transport</keyword>
<keyword id="KW-0406">Ion transport</keyword>
<keyword id="KW-1185">Reference proteome</keyword>
<keyword id="KW-0813">Transport</keyword>
<name>VATD_DICDI</name>
<evidence type="ECO:0000250" key="1"/>
<evidence type="ECO:0000256" key="2">
    <source>
        <dbReference type="SAM" id="MobiDB-lite"/>
    </source>
</evidence>
<evidence type="ECO:0000305" key="3"/>
<dbReference type="EMBL" id="AAFI02000012">
    <property type="protein sequence ID" value="EAL70058.1"/>
    <property type="molecule type" value="Genomic_DNA"/>
</dbReference>
<dbReference type="RefSeq" id="XP_643919.1">
    <property type="nucleotide sequence ID" value="XM_638827.1"/>
</dbReference>
<dbReference type="SMR" id="Q86A77"/>
<dbReference type="FunCoup" id="Q86A77">
    <property type="interactions" value="716"/>
</dbReference>
<dbReference type="STRING" id="44689.Q86A77"/>
<dbReference type="PaxDb" id="44689-DDB0235141"/>
<dbReference type="EnsemblProtists" id="EAL70058">
    <property type="protein sequence ID" value="EAL70058"/>
    <property type="gene ID" value="DDB_G0274331"/>
</dbReference>
<dbReference type="GeneID" id="8619346"/>
<dbReference type="KEGG" id="ddi:DDB_G0274331"/>
<dbReference type="dictyBase" id="DDB_G0274331"/>
<dbReference type="VEuPathDB" id="AmoebaDB:DDB_G0274331"/>
<dbReference type="eggNOG" id="KOG1647">
    <property type="taxonomic scope" value="Eukaryota"/>
</dbReference>
<dbReference type="HOGENOM" id="CLU_069688_0_0_1"/>
<dbReference type="InParanoid" id="Q86A77"/>
<dbReference type="OMA" id="REEFFRM"/>
<dbReference type="PhylomeDB" id="Q86A77"/>
<dbReference type="Reactome" id="R-DDI-1222556">
    <property type="pathway name" value="ROS and RNS production in phagocytes"/>
</dbReference>
<dbReference type="Reactome" id="R-DDI-6798695">
    <property type="pathway name" value="Neutrophil degranulation"/>
</dbReference>
<dbReference type="Reactome" id="R-DDI-77387">
    <property type="pathway name" value="Insulin receptor recycling"/>
</dbReference>
<dbReference type="Reactome" id="R-DDI-917977">
    <property type="pathway name" value="Transferrin endocytosis and recycling"/>
</dbReference>
<dbReference type="Reactome" id="R-DDI-9639288">
    <property type="pathway name" value="Amino acids regulate mTORC1"/>
</dbReference>
<dbReference type="PRO" id="PR:Q86A77"/>
<dbReference type="Proteomes" id="UP000002195">
    <property type="component" value="Chromosome 2"/>
</dbReference>
<dbReference type="GO" id="GO:0045335">
    <property type="term" value="C:phagocytic vesicle"/>
    <property type="evidence" value="ECO:0007005"/>
    <property type="project" value="dictyBase"/>
</dbReference>
<dbReference type="GO" id="GO:0033176">
    <property type="term" value="C:proton-transporting V-type ATPase complex"/>
    <property type="evidence" value="ECO:0000318"/>
    <property type="project" value="GO_Central"/>
</dbReference>
<dbReference type="GO" id="GO:0005774">
    <property type="term" value="C:vacuolar membrane"/>
    <property type="evidence" value="ECO:0000318"/>
    <property type="project" value="GO_Central"/>
</dbReference>
<dbReference type="GO" id="GO:0016471">
    <property type="term" value="C:vacuolar proton-transporting V-type ATPase complex"/>
    <property type="evidence" value="ECO:0000250"/>
    <property type="project" value="UniProtKB"/>
</dbReference>
<dbReference type="GO" id="GO:0046961">
    <property type="term" value="F:proton-transporting ATPase activity, rotational mechanism"/>
    <property type="evidence" value="ECO:0007669"/>
    <property type="project" value="InterPro"/>
</dbReference>
<dbReference type="GO" id="GO:0007035">
    <property type="term" value="P:vacuolar acidification"/>
    <property type="evidence" value="ECO:0000250"/>
    <property type="project" value="UniProtKB"/>
</dbReference>
<dbReference type="FunFam" id="1.10.287.3240:FF:000022">
    <property type="entry name" value="V-type proton ATPase subunit D"/>
    <property type="match status" value="1"/>
</dbReference>
<dbReference type="Gene3D" id="1.10.287.3240">
    <property type="match status" value="1"/>
</dbReference>
<dbReference type="InterPro" id="IPR002699">
    <property type="entry name" value="V_ATPase_D"/>
</dbReference>
<dbReference type="NCBIfam" id="TIGR00309">
    <property type="entry name" value="V_ATPase_subD"/>
    <property type="match status" value="1"/>
</dbReference>
<dbReference type="PANTHER" id="PTHR11671">
    <property type="entry name" value="V-TYPE ATP SYNTHASE SUBUNIT D"/>
    <property type="match status" value="1"/>
</dbReference>
<dbReference type="Pfam" id="PF01813">
    <property type="entry name" value="ATP-synt_D"/>
    <property type="match status" value="1"/>
</dbReference>